<evidence type="ECO:0000255" key="1">
    <source>
        <dbReference type="HAMAP-Rule" id="MF_02002"/>
    </source>
</evidence>
<dbReference type="EC" id="6.1.1.5" evidence="1"/>
<dbReference type="EMBL" id="AE016826">
    <property type="protein sequence ID" value="AAO26873.1"/>
    <property type="molecule type" value="Genomic_DNA"/>
</dbReference>
<dbReference type="RefSeq" id="WP_011091274.1">
    <property type="nucleotide sequence ID" value="NC_004545.1"/>
</dbReference>
<dbReference type="SMR" id="Q89AU9"/>
<dbReference type="STRING" id="224915.bbp_139"/>
<dbReference type="KEGG" id="bab:bbp_139"/>
<dbReference type="eggNOG" id="COG0060">
    <property type="taxonomic scope" value="Bacteria"/>
</dbReference>
<dbReference type="HOGENOM" id="CLU_001493_7_1_6"/>
<dbReference type="OrthoDB" id="9810365at2"/>
<dbReference type="Proteomes" id="UP000000601">
    <property type="component" value="Chromosome"/>
</dbReference>
<dbReference type="GO" id="GO:0005829">
    <property type="term" value="C:cytosol"/>
    <property type="evidence" value="ECO:0007669"/>
    <property type="project" value="TreeGrafter"/>
</dbReference>
<dbReference type="GO" id="GO:0002161">
    <property type="term" value="F:aminoacyl-tRNA deacylase activity"/>
    <property type="evidence" value="ECO:0007669"/>
    <property type="project" value="InterPro"/>
</dbReference>
<dbReference type="GO" id="GO:0005524">
    <property type="term" value="F:ATP binding"/>
    <property type="evidence" value="ECO:0007669"/>
    <property type="project" value="UniProtKB-UniRule"/>
</dbReference>
<dbReference type="GO" id="GO:0004822">
    <property type="term" value="F:isoleucine-tRNA ligase activity"/>
    <property type="evidence" value="ECO:0007669"/>
    <property type="project" value="UniProtKB-UniRule"/>
</dbReference>
<dbReference type="GO" id="GO:0000049">
    <property type="term" value="F:tRNA binding"/>
    <property type="evidence" value="ECO:0007669"/>
    <property type="project" value="InterPro"/>
</dbReference>
<dbReference type="GO" id="GO:0008270">
    <property type="term" value="F:zinc ion binding"/>
    <property type="evidence" value="ECO:0007669"/>
    <property type="project" value="UniProtKB-UniRule"/>
</dbReference>
<dbReference type="GO" id="GO:0006428">
    <property type="term" value="P:isoleucyl-tRNA aminoacylation"/>
    <property type="evidence" value="ECO:0007669"/>
    <property type="project" value="UniProtKB-UniRule"/>
</dbReference>
<dbReference type="CDD" id="cd07960">
    <property type="entry name" value="Anticodon_Ia_Ile_BEm"/>
    <property type="match status" value="1"/>
</dbReference>
<dbReference type="CDD" id="cd00818">
    <property type="entry name" value="IleRS_core"/>
    <property type="match status" value="1"/>
</dbReference>
<dbReference type="FunFam" id="1.10.730.20:FF:000001">
    <property type="entry name" value="Isoleucine--tRNA ligase"/>
    <property type="match status" value="1"/>
</dbReference>
<dbReference type="FunFam" id="3.40.50.620:FF:000042">
    <property type="entry name" value="Isoleucine--tRNA ligase"/>
    <property type="match status" value="1"/>
</dbReference>
<dbReference type="FunFam" id="3.40.50.620:FF:000048">
    <property type="entry name" value="Isoleucine--tRNA ligase"/>
    <property type="match status" value="1"/>
</dbReference>
<dbReference type="Gene3D" id="1.10.730.20">
    <property type="match status" value="1"/>
</dbReference>
<dbReference type="Gene3D" id="3.40.50.620">
    <property type="entry name" value="HUPs"/>
    <property type="match status" value="2"/>
</dbReference>
<dbReference type="HAMAP" id="MF_02002">
    <property type="entry name" value="Ile_tRNA_synth_type1"/>
    <property type="match status" value="1"/>
</dbReference>
<dbReference type="InterPro" id="IPR001412">
    <property type="entry name" value="aa-tRNA-synth_I_CS"/>
</dbReference>
<dbReference type="InterPro" id="IPR002300">
    <property type="entry name" value="aa-tRNA-synth_Ia"/>
</dbReference>
<dbReference type="InterPro" id="IPR033708">
    <property type="entry name" value="Anticodon_Ile_BEm"/>
</dbReference>
<dbReference type="InterPro" id="IPR002301">
    <property type="entry name" value="Ile-tRNA-ligase"/>
</dbReference>
<dbReference type="InterPro" id="IPR023585">
    <property type="entry name" value="Ile-tRNA-ligase_type1"/>
</dbReference>
<dbReference type="InterPro" id="IPR050081">
    <property type="entry name" value="Ile-tRNA_ligase"/>
</dbReference>
<dbReference type="InterPro" id="IPR013155">
    <property type="entry name" value="M/V/L/I-tRNA-synth_anticd-bd"/>
</dbReference>
<dbReference type="InterPro" id="IPR014729">
    <property type="entry name" value="Rossmann-like_a/b/a_fold"/>
</dbReference>
<dbReference type="InterPro" id="IPR009080">
    <property type="entry name" value="tRNAsynth_Ia_anticodon-bd"/>
</dbReference>
<dbReference type="InterPro" id="IPR009008">
    <property type="entry name" value="Val/Leu/Ile-tRNA-synth_edit"/>
</dbReference>
<dbReference type="InterPro" id="IPR010663">
    <property type="entry name" value="Znf_FPG/IleRS"/>
</dbReference>
<dbReference type="NCBIfam" id="TIGR00392">
    <property type="entry name" value="ileS"/>
    <property type="match status" value="1"/>
</dbReference>
<dbReference type="PANTHER" id="PTHR42765:SF1">
    <property type="entry name" value="ISOLEUCINE--TRNA LIGASE, MITOCHONDRIAL"/>
    <property type="match status" value="1"/>
</dbReference>
<dbReference type="PANTHER" id="PTHR42765">
    <property type="entry name" value="SOLEUCYL-TRNA SYNTHETASE"/>
    <property type="match status" value="1"/>
</dbReference>
<dbReference type="Pfam" id="PF08264">
    <property type="entry name" value="Anticodon_1"/>
    <property type="match status" value="1"/>
</dbReference>
<dbReference type="Pfam" id="PF00133">
    <property type="entry name" value="tRNA-synt_1"/>
    <property type="match status" value="1"/>
</dbReference>
<dbReference type="Pfam" id="PF06827">
    <property type="entry name" value="zf-FPG_IleRS"/>
    <property type="match status" value="1"/>
</dbReference>
<dbReference type="PRINTS" id="PR00984">
    <property type="entry name" value="TRNASYNTHILE"/>
</dbReference>
<dbReference type="SUPFAM" id="SSF47323">
    <property type="entry name" value="Anticodon-binding domain of a subclass of class I aminoacyl-tRNA synthetases"/>
    <property type="match status" value="1"/>
</dbReference>
<dbReference type="SUPFAM" id="SSF52374">
    <property type="entry name" value="Nucleotidylyl transferase"/>
    <property type="match status" value="1"/>
</dbReference>
<dbReference type="SUPFAM" id="SSF50677">
    <property type="entry name" value="ValRS/IleRS/LeuRS editing domain"/>
    <property type="match status" value="1"/>
</dbReference>
<dbReference type="PROSITE" id="PS00178">
    <property type="entry name" value="AA_TRNA_LIGASE_I"/>
    <property type="match status" value="1"/>
</dbReference>
<organism>
    <name type="scientific">Buchnera aphidicola subsp. Baizongia pistaciae (strain Bp)</name>
    <dbReference type="NCBI Taxonomy" id="224915"/>
    <lineage>
        <taxon>Bacteria</taxon>
        <taxon>Pseudomonadati</taxon>
        <taxon>Pseudomonadota</taxon>
        <taxon>Gammaproteobacteria</taxon>
        <taxon>Enterobacterales</taxon>
        <taxon>Erwiniaceae</taxon>
        <taxon>Buchnera</taxon>
    </lineage>
</organism>
<comment type="function">
    <text evidence="1">Catalyzes the attachment of isoleucine to tRNA(Ile). As IleRS can inadvertently accommodate and process structurally similar amino acids such as valine, to avoid such errors it has two additional distinct tRNA(Ile)-dependent editing activities. One activity is designated as 'pretransfer' editing and involves the hydrolysis of activated Val-AMP. The other activity is designated 'posttransfer' editing and involves deacylation of mischarged Val-tRNA(Ile).</text>
</comment>
<comment type="catalytic activity">
    <reaction evidence="1">
        <text>tRNA(Ile) + L-isoleucine + ATP = L-isoleucyl-tRNA(Ile) + AMP + diphosphate</text>
        <dbReference type="Rhea" id="RHEA:11060"/>
        <dbReference type="Rhea" id="RHEA-COMP:9666"/>
        <dbReference type="Rhea" id="RHEA-COMP:9695"/>
        <dbReference type="ChEBI" id="CHEBI:30616"/>
        <dbReference type="ChEBI" id="CHEBI:33019"/>
        <dbReference type="ChEBI" id="CHEBI:58045"/>
        <dbReference type="ChEBI" id="CHEBI:78442"/>
        <dbReference type="ChEBI" id="CHEBI:78528"/>
        <dbReference type="ChEBI" id="CHEBI:456215"/>
        <dbReference type="EC" id="6.1.1.5"/>
    </reaction>
</comment>
<comment type="cofactor">
    <cofactor evidence="1">
        <name>Zn(2+)</name>
        <dbReference type="ChEBI" id="CHEBI:29105"/>
    </cofactor>
    <text evidence="1">Binds 1 zinc ion per subunit.</text>
</comment>
<comment type="subunit">
    <text evidence="1">Monomer.</text>
</comment>
<comment type="subcellular location">
    <subcellularLocation>
        <location evidence="1">Cytoplasm</location>
    </subcellularLocation>
</comment>
<comment type="domain">
    <text evidence="1">IleRS has two distinct active sites: one for aminoacylation and one for editing. The misactivated valine is translocated from the active site to the editing site, which sterically excludes the correctly activated isoleucine. The single editing site contains two valyl binding pockets, one specific for each substrate (Val-AMP or Val-tRNA(Ile)).</text>
</comment>
<comment type="similarity">
    <text evidence="1">Belongs to the class-I aminoacyl-tRNA synthetase family. IleS type 1 subfamily.</text>
</comment>
<accession>Q89AU9</accession>
<gene>
    <name evidence="1" type="primary">ileS</name>
    <name type="ordered locus">bbp_139</name>
</gene>
<protein>
    <recommendedName>
        <fullName evidence="1">Isoleucine--tRNA ligase</fullName>
        <ecNumber evidence="1">6.1.1.5</ecNumber>
    </recommendedName>
    <alternativeName>
        <fullName evidence="1">Isoleucyl-tRNA synthetase</fullName>
        <shortName evidence="1">IleRS</shortName>
    </alternativeName>
</protein>
<proteinExistence type="inferred from homology"/>
<keyword id="KW-0030">Aminoacyl-tRNA synthetase</keyword>
<keyword id="KW-0067">ATP-binding</keyword>
<keyword id="KW-0963">Cytoplasm</keyword>
<keyword id="KW-0436">Ligase</keyword>
<keyword id="KW-0479">Metal-binding</keyword>
<keyword id="KW-0547">Nucleotide-binding</keyword>
<keyword id="KW-0648">Protein biosynthesis</keyword>
<keyword id="KW-1185">Reference proteome</keyword>
<keyword id="KW-0862">Zinc</keyword>
<feature type="chain" id="PRO_0000098366" description="Isoleucine--tRNA ligase">
    <location>
        <begin position="1"/>
        <end position="939"/>
    </location>
</feature>
<feature type="short sequence motif" description="'HIGH' region">
    <location>
        <begin position="58"/>
        <end position="68"/>
    </location>
</feature>
<feature type="short sequence motif" description="'KMSKS' region">
    <location>
        <begin position="603"/>
        <end position="607"/>
    </location>
</feature>
<feature type="binding site" evidence="1">
    <location>
        <position position="562"/>
    </location>
    <ligand>
        <name>L-isoleucyl-5'-AMP</name>
        <dbReference type="ChEBI" id="CHEBI:178002"/>
    </ligand>
</feature>
<feature type="binding site" evidence="1">
    <location>
        <position position="606"/>
    </location>
    <ligand>
        <name>ATP</name>
        <dbReference type="ChEBI" id="CHEBI:30616"/>
    </ligand>
</feature>
<feature type="binding site" evidence="1">
    <location>
        <position position="903"/>
    </location>
    <ligand>
        <name>Zn(2+)</name>
        <dbReference type="ChEBI" id="CHEBI:29105"/>
    </ligand>
</feature>
<feature type="binding site" evidence="1">
    <location>
        <position position="906"/>
    </location>
    <ligand>
        <name>Zn(2+)</name>
        <dbReference type="ChEBI" id="CHEBI:29105"/>
    </ligand>
</feature>
<feature type="binding site" evidence="1">
    <location>
        <position position="922"/>
    </location>
    <ligand>
        <name>Zn(2+)</name>
        <dbReference type="ChEBI" id="CHEBI:29105"/>
    </ligand>
</feature>
<feature type="binding site" evidence="1">
    <location>
        <position position="925"/>
    </location>
    <ligand>
        <name>Zn(2+)</name>
        <dbReference type="ChEBI" id="CHEBI:29105"/>
    </ligand>
</feature>
<name>SYI_BUCBP</name>
<sequence>MKDYKTTLNLPKTNFSMKGNLSKKEPFILKKWNDNNIYSLIKKQNIGKKKFFLNDGPPYANGNIHIGHAINKILKDIVIKFKTLSGFDTYYTPSWDCHGLPIEHKVEKTIKKENILITKKEFRIKCRNYAQSQVNNQKLEFIRLGVFGDWENSYLTMNFKNEANIARTLMKMFKYGYVYQDFKPVHWCINCKSALAEAEVEYHNKLSNSIIIKFKLAHNINFWNQIFKNDHNQDIHLVVWTTTPWTLPASQAIALNPNFKYQLIQTNNNLFIISEKSVPDTMNKMGIQKWKKIHIFLGKNISNLKVIHPFLNTTIPVILADHVTQELGTGIVHTAPEFGQDDYYACKKNNINFTPTIDKKGHFLNNIHPKLNNINIFKSIKIVIKLLNNNNALLHSEKLVHSYPYCWRHKTPIISRATQQWFININHNNLRNRCIKYIQEVKWIPHWSKNRMIEMIINRPDWCISRQRTWGVPIPIFIHRKTGKLHPDTIKLSQKIIQNIETNGIQAWFDITEKSFLGELFKQYKKVTDVIDVWFESGSIQLSNIYNKIQHQHNNISDLYIEGLDQHRGWFMSSLIISAAISNQTPYKKVITHGFVVDKNKKKMSKSIGNTVHPSEVINTLGSDILRLWTASTNYSKEMSISQETLIHISDYYRRIRNTARFLLANLHEFNPENDLINAKNMIILDKWAIGKALHIQKKIIKSYKNYNFHDVIKYLMNFCSLDMGTFYLEIIKDRQYTTQKNSIARRSCQTAMYLILTAFVKWITPILPFTSDELWEYIPGTNKNKFVFLELWSNQLFDLNHKDTMNHEYWNQLLIIKTEVNKALEHARQNKIIRKSLEAHMTLYVNETIKCNLKLLNKELKFLFITSKVEIKNFYEAPKDAFQSETITNFKTIIKKMNGIKCPRCWHIITKIKNNKNHEICKRCILNTIGPGELRQFL</sequence>
<reference key="1">
    <citation type="journal article" date="2003" name="Proc. Natl. Acad. Sci. U.S.A.">
        <title>Reductive genome evolution in Buchnera aphidicola.</title>
        <authorList>
            <person name="van Ham R.C.H.J."/>
            <person name="Kamerbeek J."/>
            <person name="Palacios C."/>
            <person name="Rausell C."/>
            <person name="Abascal F."/>
            <person name="Bastolla U."/>
            <person name="Fernandez J.M."/>
            <person name="Jimenez L."/>
            <person name="Postigo M."/>
            <person name="Silva F.J."/>
            <person name="Tamames J."/>
            <person name="Viguera E."/>
            <person name="Latorre A."/>
            <person name="Valencia A."/>
            <person name="Moran F."/>
            <person name="Moya A."/>
        </authorList>
    </citation>
    <scope>NUCLEOTIDE SEQUENCE [LARGE SCALE GENOMIC DNA]</scope>
    <source>
        <strain>Bp</strain>
    </source>
</reference>